<organism>
    <name type="scientific">African swine fever virus (strain Badajoz 1971 Vero-adapted)</name>
    <name type="common">Ba71V</name>
    <name type="synonym">ASFV</name>
    <dbReference type="NCBI Taxonomy" id="10498"/>
    <lineage>
        <taxon>Viruses</taxon>
        <taxon>Varidnaviria</taxon>
        <taxon>Bamfordvirae</taxon>
        <taxon>Nucleocytoviricota</taxon>
        <taxon>Pokkesviricetes</taxon>
        <taxon>Asfuvirales</taxon>
        <taxon>Asfarviridae</taxon>
        <taxon>Asfivirus</taxon>
        <taxon>African swine fever virus</taxon>
    </lineage>
</organism>
<organismHost>
    <name type="scientific">Ornithodoros</name>
    <name type="common">relapsing fever ticks</name>
    <dbReference type="NCBI Taxonomy" id="6937"/>
</organismHost>
<organismHost>
    <name type="scientific">Sus scrofa</name>
    <name type="common">Pig</name>
    <dbReference type="NCBI Taxonomy" id="9823"/>
</organismHost>
<accession>Q65187</accession>
<feature type="chain" id="PRO_0000373769" description="Protein H339R">
    <location>
        <begin position="1"/>
        <end position="339"/>
    </location>
</feature>
<evidence type="ECO:0000269" key="1">
    <source>
    </source>
</evidence>
<evidence type="ECO:0000269" key="2">
    <source>
    </source>
</evidence>
<evidence type="ECO:0000269" key="3">
    <source>
    </source>
</evidence>
<evidence type="ECO:0000305" key="4"/>
<reference key="1">
    <citation type="journal article" date="1995" name="Virology">
        <title>Analysis of the complete nucleotide sequence of African swine fever virus.</title>
        <authorList>
            <person name="Yanez R.J."/>
            <person name="Rodriguez J.M."/>
            <person name="Nogal M.L."/>
            <person name="Yuste L."/>
            <person name="Enriquez C."/>
            <person name="Rodriguez J.F."/>
            <person name="Vinuela E."/>
        </authorList>
    </citation>
    <scope>NUCLEOTIDE SEQUENCE [LARGE SCALE GENOMIC DNA]</scope>
</reference>
<reference key="2">
    <citation type="journal article" date="2002" name="J. Virol.">
        <title>The African swine fever virus protein j4R binds to the alpha chain of nascent polypeptide-associated complex.</title>
        <authorList>
            <person name="Goatley L.C."/>
            <person name="Twigg S.R.F."/>
            <person name="Miskin J.E."/>
            <person name="Monaghan P."/>
            <person name="St-Arnaud R."/>
            <person name="Smith G.L."/>
            <person name="Dixon L.K."/>
        </authorList>
    </citation>
    <scope>FUNCTION</scope>
    <scope>SUBCELLULAR LOCATION</scope>
    <scope>INTERACTION WITH HUMAN NACA</scope>
</reference>
<reference key="3">
    <citation type="journal article" date="2018" name="J. Virol.">
        <title>A Proteomic Atlas of the African Swine Fever Virus Particle.</title>
        <authorList>
            <person name="Alejo A."/>
            <person name="Matamoros T."/>
            <person name="Guerra M."/>
            <person name="Andres G."/>
        </authorList>
    </citation>
    <scope>SUBCELLULAR LOCATION</scope>
</reference>
<reference key="4">
    <citation type="journal article" date="2020" name="J. Virol.">
        <title>The African Swine Fever Virus Transcriptome.</title>
        <authorList>
            <person name="Cackett G."/>
            <person name="Matelska D."/>
            <person name="Sykora M."/>
            <person name="Portugal R."/>
            <person name="Malecki M."/>
            <person name="Baehler J."/>
            <person name="Dixon L."/>
            <person name="Werner F."/>
        </authorList>
    </citation>
    <scope>INDUCTION</scope>
</reference>
<sequence length="339" mass="39764">MAGRVKIKQKELIDSTVKNKNVMNLFHEIIGSKGNINFSVVWPKFKKIKQSVYDYISTLSVLEKASVMQNFEADKKLLELFVQKLWAAYEGYFKYPEIEKYEVEGQVNFNLVPQCVLEKFSQLYRIRINSELVTLILNSCAFMSKYNDYILKKDPYILTITPGLCFSPIPNFEDLNFKHLYNSDKNSQHDKEFIMFILYKLYTAALGVYNAISIPDIDVEDLENIILSSVSQIKKQIPRCKDAFNKIESSVHLLRKNFNTYYSDYVGSGYNPTIIMEQYIKDISQDSKNISPRISYQFRTIIKYYRDMIATRHQTMDPQVLNLVKHVEKKLDMLDREKN</sequence>
<dbReference type="EMBL" id="U18466">
    <property type="protein sequence ID" value="AAA65345.1"/>
    <property type="molecule type" value="Genomic_DNA"/>
</dbReference>
<dbReference type="RefSeq" id="NP_042809.1">
    <property type="nucleotide sequence ID" value="NC_001659.2"/>
</dbReference>
<dbReference type="SMR" id="Q65187"/>
<dbReference type="GeneID" id="22220346"/>
<dbReference type="KEGG" id="vg:22220346"/>
<dbReference type="Proteomes" id="UP000000624">
    <property type="component" value="Segment"/>
</dbReference>
<dbReference type="GO" id="GO:0030430">
    <property type="term" value="C:host cell cytoplasm"/>
    <property type="evidence" value="ECO:0007669"/>
    <property type="project" value="UniProtKB-SubCell"/>
</dbReference>
<dbReference type="GO" id="GO:0042025">
    <property type="term" value="C:host cell nucleus"/>
    <property type="evidence" value="ECO:0007669"/>
    <property type="project" value="UniProtKB-SubCell"/>
</dbReference>
<dbReference type="GO" id="GO:0044423">
    <property type="term" value="C:virion component"/>
    <property type="evidence" value="ECO:0007669"/>
    <property type="project" value="UniProtKB-KW"/>
</dbReference>
<comment type="subunit">
    <text evidence="1">Interacts with NACA (alpha chain of nascent polypeptide-associated complex).</text>
</comment>
<comment type="subcellular location">
    <subcellularLocation>
        <location evidence="1">Host cytoplasm</location>
    </subcellularLocation>
    <subcellularLocation>
        <location evidence="1">Host nucleus</location>
    </subcellularLocation>
    <subcellularLocation>
        <location evidence="2">Virion</location>
    </subcellularLocation>
</comment>
<comment type="induction">
    <text evidence="3">Expressed in the late phase of the viral replicative cycle.</text>
</comment>
<comment type="similarity">
    <text evidence="4">Belongs to the asfivirus H339R family.</text>
</comment>
<name>VFH33_ASFB7</name>
<gene>
    <name type="ordered locus">Ba71V-116</name>
    <name type="ORF">H339R</name>
</gene>
<protein>
    <recommendedName>
        <fullName>Protein H339R</fullName>
        <shortName>pH339R</shortName>
    </recommendedName>
    <alternativeName>
        <fullName>Protein j4R</fullName>
    </alternativeName>
</protein>
<proteinExistence type="evidence at protein level"/>
<keyword id="KW-1035">Host cytoplasm</keyword>
<keyword id="KW-1048">Host nucleus</keyword>
<keyword id="KW-0945">Host-virus interaction</keyword>
<keyword id="KW-0426">Late protein</keyword>
<keyword id="KW-1185">Reference proteome</keyword>
<keyword id="KW-0946">Virion</keyword>